<evidence type="ECO:0000255" key="1">
    <source>
        <dbReference type="HAMAP-Rule" id="MF_01416"/>
    </source>
</evidence>
<feature type="chain" id="PRO_0000371161" description="ATP synthase subunit delta">
    <location>
        <begin position="1"/>
        <end position="178"/>
    </location>
</feature>
<reference key="1">
    <citation type="journal article" date="2005" name="J. Infect. Dis.">
        <title>Genome sequence of a serotype M28 strain of group A Streptococcus: potential new insights into puerperal sepsis and bacterial disease specificity.</title>
        <authorList>
            <person name="Green N.M."/>
            <person name="Zhang S."/>
            <person name="Porcella S.F."/>
            <person name="Nagiec M.J."/>
            <person name="Barbian K.D."/>
            <person name="Beres S.B."/>
            <person name="Lefebvre R.B."/>
            <person name="Musser J.M."/>
        </authorList>
    </citation>
    <scope>NUCLEOTIDE SEQUENCE [LARGE SCALE GENOMIC DNA]</scope>
    <source>
        <strain>MGAS6180</strain>
    </source>
</reference>
<organism>
    <name type="scientific">Streptococcus pyogenes serotype M28 (strain MGAS6180)</name>
    <dbReference type="NCBI Taxonomy" id="319701"/>
    <lineage>
        <taxon>Bacteria</taxon>
        <taxon>Bacillati</taxon>
        <taxon>Bacillota</taxon>
        <taxon>Bacilli</taxon>
        <taxon>Lactobacillales</taxon>
        <taxon>Streptococcaceae</taxon>
        <taxon>Streptococcus</taxon>
    </lineage>
</organism>
<accession>Q48UD6</accession>
<comment type="function">
    <text evidence="1">F(1)F(0) ATP synthase produces ATP from ADP in the presence of a proton or sodium gradient. F-type ATPases consist of two structural domains, F(1) containing the extramembraneous catalytic core and F(0) containing the membrane proton channel, linked together by a central stalk and a peripheral stalk. During catalysis, ATP synthesis in the catalytic domain of F(1) is coupled via a rotary mechanism of the central stalk subunits to proton translocation.</text>
</comment>
<comment type="function">
    <text evidence="1">This protein is part of the stalk that links CF(0) to CF(1). It either transmits conformational changes from CF(0) to CF(1) or is implicated in proton conduction.</text>
</comment>
<comment type="subunit">
    <text evidence="1">F-type ATPases have 2 components, F(1) - the catalytic core - and F(0) - the membrane proton channel. F(1) has five subunits: alpha(3), beta(3), gamma(1), delta(1), epsilon(1). F(0) has three main subunits: a(1), b(2) and c(10-14). The alpha and beta chains form an alternating ring which encloses part of the gamma chain. F(1) is attached to F(0) by a central stalk formed by the gamma and epsilon chains, while a peripheral stalk is formed by the delta and b chains.</text>
</comment>
<comment type="subcellular location">
    <subcellularLocation>
        <location evidence="1">Cell membrane</location>
        <topology evidence="1">Peripheral membrane protein</topology>
    </subcellularLocation>
</comment>
<comment type="similarity">
    <text evidence="1">Belongs to the ATPase delta chain family.</text>
</comment>
<proteinExistence type="inferred from homology"/>
<sequence length="178" mass="19917">MTKKEQALIEQYAKSLVEVASEHHSLDALQADVLAILETFVTTNLDQSLSSLAVPHAEKIKLLTLLKGNNSVYMNNFLNLILQNEREAYLYQMLQTVLNEIAIVSNQYDVTVTSSLPLTEEQKSRVRAVVAKKFAVTAGRLIEKVDPSLIGGFIISVNNKVIDTSIRRQLQAFKMNLK</sequence>
<protein>
    <recommendedName>
        <fullName evidence="1">ATP synthase subunit delta</fullName>
    </recommendedName>
    <alternativeName>
        <fullName evidence="1">ATP synthase F(1) sector subunit delta</fullName>
    </alternativeName>
    <alternativeName>
        <fullName evidence="1">F-type ATPase subunit delta</fullName>
        <shortName evidence="1">F-ATPase subunit delta</shortName>
    </alternativeName>
</protein>
<name>ATPD_STRPM</name>
<keyword id="KW-0066">ATP synthesis</keyword>
<keyword id="KW-1003">Cell membrane</keyword>
<keyword id="KW-0139">CF(1)</keyword>
<keyword id="KW-0375">Hydrogen ion transport</keyword>
<keyword id="KW-0406">Ion transport</keyword>
<keyword id="KW-0472">Membrane</keyword>
<keyword id="KW-0813">Transport</keyword>
<dbReference type="EMBL" id="CP000056">
    <property type="protein sequence ID" value="AAX71670.1"/>
    <property type="molecule type" value="Genomic_DNA"/>
</dbReference>
<dbReference type="RefSeq" id="WP_002985240.1">
    <property type="nucleotide sequence ID" value="NC_007296.2"/>
</dbReference>
<dbReference type="SMR" id="Q48UD6"/>
<dbReference type="KEGG" id="spb:M28_Spy0556"/>
<dbReference type="HOGENOM" id="CLU_085114_1_2_9"/>
<dbReference type="GO" id="GO:0005886">
    <property type="term" value="C:plasma membrane"/>
    <property type="evidence" value="ECO:0007669"/>
    <property type="project" value="UniProtKB-SubCell"/>
</dbReference>
<dbReference type="GO" id="GO:0045259">
    <property type="term" value="C:proton-transporting ATP synthase complex"/>
    <property type="evidence" value="ECO:0007669"/>
    <property type="project" value="UniProtKB-KW"/>
</dbReference>
<dbReference type="GO" id="GO:0046933">
    <property type="term" value="F:proton-transporting ATP synthase activity, rotational mechanism"/>
    <property type="evidence" value="ECO:0007669"/>
    <property type="project" value="UniProtKB-UniRule"/>
</dbReference>
<dbReference type="Gene3D" id="1.10.520.20">
    <property type="entry name" value="N-terminal domain of the delta subunit of the F1F0-ATP synthase"/>
    <property type="match status" value="1"/>
</dbReference>
<dbReference type="HAMAP" id="MF_01416">
    <property type="entry name" value="ATP_synth_delta_bact"/>
    <property type="match status" value="1"/>
</dbReference>
<dbReference type="InterPro" id="IPR026015">
    <property type="entry name" value="ATP_synth_OSCP/delta_N_sf"/>
</dbReference>
<dbReference type="InterPro" id="IPR000711">
    <property type="entry name" value="ATPase_OSCP/dsu"/>
</dbReference>
<dbReference type="NCBIfam" id="TIGR01145">
    <property type="entry name" value="ATP_synt_delta"/>
    <property type="match status" value="1"/>
</dbReference>
<dbReference type="NCBIfam" id="NF004401">
    <property type="entry name" value="PRK05758.2-1"/>
    <property type="match status" value="1"/>
</dbReference>
<dbReference type="PANTHER" id="PTHR11910">
    <property type="entry name" value="ATP SYNTHASE DELTA CHAIN"/>
    <property type="match status" value="1"/>
</dbReference>
<dbReference type="Pfam" id="PF00213">
    <property type="entry name" value="OSCP"/>
    <property type="match status" value="1"/>
</dbReference>
<dbReference type="PRINTS" id="PR00125">
    <property type="entry name" value="ATPASEDELTA"/>
</dbReference>
<dbReference type="SUPFAM" id="SSF47928">
    <property type="entry name" value="N-terminal domain of the delta subunit of the F1F0-ATP synthase"/>
    <property type="match status" value="1"/>
</dbReference>
<gene>
    <name evidence="1" type="primary">atpH</name>
    <name type="ordered locus">M28_Spy0556</name>
</gene>